<proteinExistence type="evidence at transcript level"/>
<organism evidence="7">
    <name type="scientific">Micrurus mipartitus</name>
    <name type="common">Red-tailed coral snake</name>
    <dbReference type="NCBI Taxonomy" id="430902"/>
    <lineage>
        <taxon>Eukaryota</taxon>
        <taxon>Metazoa</taxon>
        <taxon>Chordata</taxon>
        <taxon>Craniata</taxon>
        <taxon>Vertebrata</taxon>
        <taxon>Euteleostomi</taxon>
        <taxon>Lepidosauria</taxon>
        <taxon>Squamata</taxon>
        <taxon>Bifurcata</taxon>
        <taxon>Unidentata</taxon>
        <taxon>Episquamata</taxon>
        <taxon>Toxicofera</taxon>
        <taxon>Serpentes</taxon>
        <taxon>Colubroidea</taxon>
        <taxon>Elapidae</taxon>
        <taxon>Elapinae</taxon>
        <taxon>Micrurus</taxon>
    </lineage>
</organism>
<dbReference type="EMBL" id="KY635901">
    <property type="protein sequence ID" value="AVI57320.1"/>
    <property type="molecule type" value="mRNA"/>
</dbReference>
<dbReference type="SMR" id="A0A2P1BST7"/>
<dbReference type="GO" id="GO:0005576">
    <property type="term" value="C:extracellular region"/>
    <property type="evidence" value="ECO:0007669"/>
    <property type="project" value="UniProtKB-SubCell"/>
</dbReference>
<dbReference type="GO" id="GO:0030550">
    <property type="term" value="F:acetylcholine receptor inhibitor activity"/>
    <property type="evidence" value="ECO:0007669"/>
    <property type="project" value="UniProtKB-KW"/>
</dbReference>
<dbReference type="GO" id="GO:0099106">
    <property type="term" value="F:ion channel regulator activity"/>
    <property type="evidence" value="ECO:0007669"/>
    <property type="project" value="UniProtKB-KW"/>
</dbReference>
<dbReference type="GO" id="GO:0090729">
    <property type="term" value="F:toxin activity"/>
    <property type="evidence" value="ECO:0007669"/>
    <property type="project" value="UniProtKB-KW"/>
</dbReference>
<dbReference type="Gene3D" id="2.10.60.10">
    <property type="entry name" value="CD59"/>
    <property type="match status" value="1"/>
</dbReference>
<dbReference type="InterPro" id="IPR045860">
    <property type="entry name" value="Snake_toxin-like_sf"/>
</dbReference>
<dbReference type="SUPFAM" id="SSF57302">
    <property type="entry name" value="Snake toxin-like"/>
    <property type="match status" value="1"/>
</dbReference>
<accession>A0A2P1BST7</accession>
<protein>
    <recommendedName>
        <fullName evidence="6">Mipartoxin-1A</fullName>
    </recommendedName>
    <alternativeName>
        <fullName evidence="5">Mipartoxin-IA</fullName>
    </alternativeName>
    <alternativeName>
        <fullName evidence="5">Three-finger toxin-02</fullName>
        <shortName evidence="5">3FTx-02</shortName>
    </alternativeName>
</protein>
<keyword id="KW-0008">Acetylcholine receptor inhibiting toxin</keyword>
<keyword id="KW-1015">Disulfide bond</keyword>
<keyword id="KW-0872">Ion channel impairing toxin</keyword>
<keyword id="KW-0528">Neurotoxin</keyword>
<keyword id="KW-0629">Postsynaptic neurotoxin</keyword>
<keyword id="KW-0964">Secreted</keyword>
<keyword id="KW-0732">Signal</keyword>
<keyword id="KW-0800">Toxin</keyword>
<sequence length="81" mass="9267">MKTLLLTLVVVTIVCLDLGNSLKCYVSREGETQTCPEGEKLCEKYAVSYFHDGRWRYRYECTSACHRGPYNVCCSTDLCNK</sequence>
<feature type="signal peptide" evidence="3">
    <location>
        <begin position="1"/>
        <end position="21"/>
    </location>
</feature>
<feature type="chain" id="PRO_5015189986" description="Mipartoxin-1A" evidence="3">
    <location>
        <begin position="22"/>
        <end position="81"/>
    </location>
</feature>
<feature type="disulfide bond" evidence="2">
    <location>
        <begin position="24"/>
        <end position="42"/>
    </location>
</feature>
<feature type="disulfide bond" evidence="2">
    <location>
        <begin position="35"/>
        <end position="61"/>
    </location>
</feature>
<feature type="disulfide bond" evidence="2">
    <location>
        <begin position="65"/>
        <end position="73"/>
    </location>
</feature>
<feature type="disulfide bond" evidence="2">
    <location>
        <begin position="74"/>
        <end position="79"/>
    </location>
</feature>
<evidence type="ECO:0000250" key="1">
    <source>
        <dbReference type="UniProtKB" id="B3EWF8"/>
    </source>
</evidence>
<evidence type="ECO:0000250" key="2">
    <source>
        <dbReference type="UniProtKB" id="P07526"/>
    </source>
</evidence>
<evidence type="ECO:0000255" key="3"/>
<evidence type="ECO:0000269" key="4">
    <source>
    </source>
</evidence>
<evidence type="ECO:0000303" key="5">
    <source>
    </source>
</evidence>
<evidence type="ECO:0000305" key="6"/>
<evidence type="ECO:0000312" key="7">
    <source>
        <dbReference type="EMBL" id="AVI57320.1"/>
    </source>
</evidence>
<name>3SX1A_MICMP</name>
<comment type="function">
    <text evidence="1">Snake venom neurotoxin that blocks neuromuscular transmission, presenting a postsynaptic action through the nicotinic acetylcholine receptor (nAChR). Has no cytotoxic activity.</text>
</comment>
<comment type="subcellular location">
    <subcellularLocation>
        <location evidence="1">Secreted</location>
    </subcellularLocation>
</comment>
<comment type="tissue specificity">
    <text evidence="4">Expressed by the venom gland.</text>
</comment>
<comment type="similarity">
    <text evidence="6">Belongs to the three-finger toxin family. Short-chain subfamily.</text>
</comment>
<reference evidence="6" key="1">
    <citation type="journal article" date="2019" name="Toxicon">
        <title>Novel three-finger toxins from Micrurus dumerilii and Micrurus mipartitus coral snake venoms: Phylogenetic relationships and characterization of Clarkitoxin-I-Mdum.</title>
        <authorList>
            <person name="Rey-Suarez P."/>
            <person name="Saldarriaga-Cordoba M."/>
            <person name="Torres U."/>
            <person name="Marin-Villa M."/>
            <person name="Lomonte B."/>
            <person name="Nunez V."/>
        </authorList>
    </citation>
    <scope>NUCLEOTIDE SEQUENCE [MRNA]</scope>
    <scope>TISSUE SPECIFICITY</scope>
    <source>
        <tissue evidence="5">Venom gland</tissue>
    </source>
</reference>